<name>LMP1_EBVG</name>
<keyword id="KW-0002">3D-structure</keyword>
<keyword id="KW-1074">Activation of host NF-kappa-B by virus</keyword>
<keyword id="KW-1032">Host cell membrane</keyword>
<keyword id="KW-1043">Host membrane</keyword>
<keyword id="KW-0945">Host-virus interaction</keyword>
<keyword id="KW-1090">Inhibition of host innate immune response by virus</keyword>
<keyword id="KW-1114">Inhibition of host interferon signaling pathway by virus</keyword>
<keyword id="KW-1113">Inhibition of host RLR pathway by virus</keyword>
<keyword id="KW-1110">Inhibition of host TRAFs by virus</keyword>
<keyword id="KW-1112">Inhibition of host TYK2 by virus</keyword>
<keyword id="KW-0922">Interferon antiviral system evasion</keyword>
<keyword id="KW-0472">Membrane</keyword>
<keyword id="KW-0553">Oncogene</keyword>
<keyword id="KW-0597">Phosphoprotein</keyword>
<keyword id="KW-0812">Transmembrane</keyword>
<keyword id="KW-1133">Transmembrane helix</keyword>
<keyword id="KW-0832">Ubl conjugation</keyword>
<keyword id="KW-0899">Viral immunoevasion</keyword>
<organismHost>
    <name type="scientific">Homo sapiens</name>
    <name type="common">Human</name>
    <dbReference type="NCBI Taxonomy" id="9606"/>
</organismHost>
<comment type="function">
    <text evidence="2">Acts as a CD40 functional homolog to prevent apoptosis of infected B-lymphocytes and drive their proliferation. Functions as a constitutively active tumor necrosis factor receptor that induces the activation of several signaling pathways, including those of the NF-kappa-B family. LMP1 signaling leads to up-regulation of antiapoptotic proteins and provide growth signals in latently infected cells. Interacts with host UBE2I and subsequently affects the sumoylation state of several cellular proteins. For example, induces the sumoylation of host IRF7 thereby limiting its transcriptional activity and modulating the activation of innate immune responses. Also inhibits host IFN-alpha-stimulated STAT2 nuclear translocation and interferon-stimulated response element transcriptional activity by interacting with and inhibiting host TYK2. Induces SUMO expression during viral latency thereby dysregulating the host sumoylation processes.</text>
</comment>
<comment type="subunit">
    <text evidence="2">Interacts (via PXQXT motif) with host tumor necrosis factor receptor-associated factor (TRAF) proteins TRAF1, TRAF2, TRAF3 and TRAF5. Interacts with human protein ZMYND11; leading to negatively regulate NF-kappa-B activation. Interacts with host UBE2I; this interaction induces the sumoylation of various cellular proteins. Interacts with host IRF7.</text>
</comment>
<comment type="subcellular location">
    <subcellularLocation>
        <location evidence="1">Host cell membrane</location>
        <topology evidence="1">Multi-pass membrane protein</topology>
    </subcellularLocation>
</comment>
<comment type="domain">
    <text evidence="1">Two regions, C-terminal-activating region 1 (CTAR1) and CTAR2, have been identified within the cytoplasmic carboxy terminal domain that activates NF-kappa-B.</text>
</comment>
<comment type="PTM">
    <text evidence="1">Ubiquitinated on the N-terminus.</text>
</comment>
<comment type="similarity">
    <text evidence="5">Belongs to the herpesviridae LMP-1 family.</text>
</comment>
<organism>
    <name type="scientific">Epstein-Barr virus (strain GD1)</name>
    <name type="common">HHV-4</name>
    <name type="synonym">Human gammaherpesvirus 4</name>
    <dbReference type="NCBI Taxonomy" id="10376"/>
    <lineage>
        <taxon>Viruses</taxon>
        <taxon>Duplodnaviria</taxon>
        <taxon>Heunggongvirae</taxon>
        <taxon>Peploviricota</taxon>
        <taxon>Herviviricetes</taxon>
        <taxon>Herpesvirales</taxon>
        <taxon>Orthoherpesviridae</taxon>
        <taxon>Gammaherpesvirinae</taxon>
        <taxon>Lymphocryptovirus</taxon>
        <taxon>Lymphocryptovirus humangamma4</taxon>
    </lineage>
</organism>
<sequence length="366" mass="39763">MERDLERGPPGPPRPPLGPPLSSSIGLALLLLLLALLFWLYIVLSNWTGGALLVLYSFALMLIIIILIIFIFRRDLLCPLGGLGLLLLMVTLLLIALWNLHGQALYLGIVLFIFGCLLVLGLWIYFLEILWRLGATIWQLLAFILAFFLAIILLIIALYLQQNWWTLLVDLLWLLLFMAILIWMYFHGPRHTDEHHHDDSLPHPQQATDDSSHESDSNSNEGRHHLLVSGAGDGPPLCSQNLGAPGGGPDNGPQDPDNTDDNGPQDPDNTDDNGNTDDNGPQDPDNTDDNGPHDPLPHNPSDSAGNDGGPPNLTEEVENKGGDRGPPSMTDGGGGDPHLPTLLLGTSGSGGDDDDPHGPVQLSYYD</sequence>
<dbReference type="EMBL" id="AY961628">
    <property type="status" value="NOT_ANNOTATED_CDS"/>
    <property type="molecule type" value="Genomic_DNA"/>
</dbReference>
<dbReference type="PDB" id="8XH6">
    <property type="method" value="EM"/>
    <property type="resolution" value="3.52 A"/>
    <property type="chains" value="A/B=24-185"/>
</dbReference>
<dbReference type="PDB" id="8XH7">
    <property type="method" value="EM"/>
    <property type="resolution" value="3.52 A"/>
    <property type="chains" value="A/B/C/D/E/F=24-185"/>
</dbReference>
<dbReference type="PDBsum" id="8XH6"/>
<dbReference type="PDBsum" id="8XH7"/>
<dbReference type="SMR" id="P0C741"/>
<dbReference type="Proteomes" id="UP000007641">
    <property type="component" value="Genome"/>
</dbReference>
<dbReference type="GO" id="GO:0020002">
    <property type="term" value="C:host cell plasma membrane"/>
    <property type="evidence" value="ECO:0007669"/>
    <property type="project" value="UniProtKB-SubCell"/>
</dbReference>
<dbReference type="GO" id="GO:0016020">
    <property type="term" value="C:membrane"/>
    <property type="evidence" value="ECO:0007669"/>
    <property type="project" value="UniProtKB-KW"/>
</dbReference>
<dbReference type="GO" id="GO:0085033">
    <property type="term" value="P:symbiont-mediated activation of host NF-kappaB cascade"/>
    <property type="evidence" value="ECO:0007669"/>
    <property type="project" value="UniProtKB-KW"/>
</dbReference>
<dbReference type="GO" id="GO:0039574">
    <property type="term" value="P:symbiont-mediated suppression of host JAK-STAT cascade via inhibition of host TYK2 activity"/>
    <property type="evidence" value="ECO:0007669"/>
    <property type="project" value="UniProtKB-KW"/>
</dbReference>
<dbReference type="GO" id="GO:0039527">
    <property type="term" value="P:symbiont-mediated suppression of host TRAF-mediated signal transduction"/>
    <property type="evidence" value="ECO:0007669"/>
    <property type="project" value="UniProtKB-KW"/>
</dbReference>
<dbReference type="GO" id="GO:0039502">
    <property type="term" value="P:symbiont-mediated suppression of host type I interferon-mediated signaling pathway"/>
    <property type="evidence" value="ECO:0007669"/>
    <property type="project" value="UniProtKB-KW"/>
</dbReference>
<dbReference type="GO" id="GO:0019087">
    <property type="term" value="P:symbiont-mediated transformation of host cell"/>
    <property type="evidence" value="ECO:0007669"/>
    <property type="project" value="InterPro"/>
</dbReference>
<dbReference type="InterPro" id="IPR007961">
    <property type="entry name" value="Herpes_LMP1"/>
</dbReference>
<dbReference type="Pfam" id="PF05297">
    <property type="entry name" value="Herpes_LMP1"/>
    <property type="match status" value="1"/>
</dbReference>
<evidence type="ECO:0000250" key="1"/>
<evidence type="ECO:0000250" key="2">
    <source>
        <dbReference type="UniProtKB" id="P03230"/>
    </source>
</evidence>
<evidence type="ECO:0000255" key="3"/>
<evidence type="ECO:0000256" key="4">
    <source>
        <dbReference type="SAM" id="MobiDB-lite"/>
    </source>
</evidence>
<evidence type="ECO:0000305" key="5"/>
<gene>
    <name type="primary">LMP1</name>
    <name type="ORF">BNLF1</name>
</gene>
<feature type="chain" id="PRO_0000375962" description="Latent membrane protein 1">
    <location>
        <begin position="1"/>
        <end position="366"/>
    </location>
</feature>
<feature type="topological domain" description="Cytoplasmic">
    <location>
        <begin position="1"/>
        <end position="23"/>
    </location>
</feature>
<feature type="transmembrane region" description="Helical" evidence="3">
    <location>
        <begin position="24"/>
        <end position="44"/>
    </location>
</feature>
<feature type="topological domain" description="Extracellular">
    <location>
        <begin position="45"/>
        <end position="51"/>
    </location>
</feature>
<feature type="transmembrane region" description="Helical" evidence="3">
    <location>
        <begin position="52"/>
        <end position="72"/>
    </location>
</feature>
<feature type="topological domain" description="Cytoplasmic">
    <location>
        <begin position="73"/>
        <end position="75"/>
    </location>
</feature>
<feature type="transmembrane region" description="Helical" evidence="3">
    <location>
        <begin position="76"/>
        <end position="96"/>
    </location>
</feature>
<feature type="topological domain" description="Extracellular">
    <location>
        <begin position="97"/>
        <end position="106"/>
    </location>
</feature>
<feature type="transmembrane region" description="Helical" evidence="3">
    <location>
        <begin position="107"/>
        <end position="127"/>
    </location>
</feature>
<feature type="topological domain" description="Cytoplasmic">
    <location>
        <begin position="128"/>
        <end position="139"/>
    </location>
</feature>
<feature type="transmembrane region" description="Helical" evidence="3">
    <location>
        <begin position="140"/>
        <end position="160"/>
    </location>
</feature>
<feature type="topological domain" description="Extracellular">
    <location>
        <begin position="161"/>
        <end position="163"/>
    </location>
</feature>
<feature type="transmembrane region" description="Helical" evidence="3">
    <location>
        <begin position="164"/>
        <end position="184"/>
    </location>
</feature>
<feature type="topological domain" description="Cytoplasmic">
    <location>
        <begin position="185"/>
        <end position="366"/>
    </location>
</feature>
<feature type="region of interest" description="Disordered" evidence="4">
    <location>
        <begin position="194"/>
        <end position="366"/>
    </location>
</feature>
<feature type="region of interest" description="CTAR1">
    <location>
        <begin position="194"/>
        <end position="232"/>
    </location>
</feature>
<feature type="region of interest" description="CTAR2">
    <location>
        <begin position="332"/>
        <end position="366"/>
    </location>
</feature>
<feature type="short sequence motif" description="Interaction with host TRAF proteins">
    <location>
        <begin position="204"/>
        <end position="208"/>
    </location>
</feature>
<feature type="compositionally biased region" description="Basic and acidic residues" evidence="4">
    <location>
        <begin position="210"/>
        <end position="224"/>
    </location>
</feature>
<feature type="compositionally biased region" description="Low complexity" evidence="4">
    <location>
        <begin position="251"/>
        <end position="267"/>
    </location>
</feature>
<feature type="compositionally biased region" description="Low complexity" evidence="4">
    <location>
        <begin position="337"/>
        <end position="346"/>
    </location>
</feature>
<accession>P0C741</accession>
<proteinExistence type="evidence at protein level"/>
<reference key="1">
    <citation type="journal article" date="2005" name="J. Virol.">
        <title>Genomic sequence analysis of Epstein-Barr virus strain GD1 from a nasopharyngeal carcinoma patient.</title>
        <authorList>
            <person name="Zeng M.-S."/>
            <person name="Li D.-J."/>
            <person name="Liu Q.-L."/>
            <person name="Song L.-B."/>
            <person name="Li M.-Z."/>
            <person name="Zhang R.-H."/>
            <person name="Yu X.-J."/>
            <person name="Wang H.-M."/>
            <person name="Ernberg I."/>
            <person name="Zeng Y.-X."/>
        </authorList>
    </citation>
    <scope>NUCLEOTIDE SEQUENCE [LARGE SCALE GENOMIC DNA]</scope>
</reference>
<protein>
    <recommendedName>
        <fullName>Latent membrane protein 1</fullName>
        <shortName>LMP-1</shortName>
    </recommendedName>
    <alternativeName>
        <fullName>Protein p63</fullName>
    </alternativeName>
</protein>